<sequence length="367" mass="39551">MTLQRTPLHQLCQDGGGRMVPFAGWEMPVQFSGLIQEHKAVREQVGMFDISHMGVLRLEGPNPKDALQQLVPSDLHRIGPGEACYTVLLNESGGIRDDLIVYDCGAVDAERGALVLVINAACAEADTAWIRDQMEPAGLTVSDLKAGGVLLALQGPQSIPLLEELSGESLSDLPRFGHRTLSLKDIAHPVFTGRTGYTGEDGAELLLTAADGQKLWQILLDRGVSPCGLGARDTLRLEAAMHLYGMDMNAETTPFEAGLGWLVHLEMPVDFVGRQALEQAAESGPTKRLVGLKLQGRAIARHDYPVLHNGETVGVVTSGTWSPTLEEPIALAYVPTALAKLGAELSVEIRGKAQPACVVKRPFYRRS</sequence>
<dbReference type="EC" id="2.1.2.10" evidence="1"/>
<dbReference type="EMBL" id="BX569695">
    <property type="protein sequence ID" value="CAE08940.1"/>
    <property type="molecule type" value="Genomic_DNA"/>
</dbReference>
<dbReference type="RefSeq" id="WP_011129278.1">
    <property type="nucleotide sequence ID" value="NC_005070.1"/>
</dbReference>
<dbReference type="SMR" id="Q7TTS1"/>
<dbReference type="STRING" id="84588.SYNW2425"/>
<dbReference type="KEGG" id="syw:SYNW2425"/>
<dbReference type="eggNOG" id="COG0404">
    <property type="taxonomic scope" value="Bacteria"/>
</dbReference>
<dbReference type="HOGENOM" id="CLU_007884_10_2_3"/>
<dbReference type="Proteomes" id="UP000001422">
    <property type="component" value="Chromosome"/>
</dbReference>
<dbReference type="GO" id="GO:0005829">
    <property type="term" value="C:cytosol"/>
    <property type="evidence" value="ECO:0007669"/>
    <property type="project" value="TreeGrafter"/>
</dbReference>
<dbReference type="GO" id="GO:0005960">
    <property type="term" value="C:glycine cleavage complex"/>
    <property type="evidence" value="ECO:0007669"/>
    <property type="project" value="InterPro"/>
</dbReference>
<dbReference type="GO" id="GO:0004047">
    <property type="term" value="F:aminomethyltransferase activity"/>
    <property type="evidence" value="ECO:0007669"/>
    <property type="project" value="UniProtKB-UniRule"/>
</dbReference>
<dbReference type="GO" id="GO:0008483">
    <property type="term" value="F:transaminase activity"/>
    <property type="evidence" value="ECO:0007669"/>
    <property type="project" value="UniProtKB-KW"/>
</dbReference>
<dbReference type="GO" id="GO:0019464">
    <property type="term" value="P:glycine decarboxylation via glycine cleavage system"/>
    <property type="evidence" value="ECO:0007669"/>
    <property type="project" value="UniProtKB-UniRule"/>
</dbReference>
<dbReference type="FunFam" id="2.40.30.110:FF:000003">
    <property type="entry name" value="Aminomethyltransferase"/>
    <property type="match status" value="1"/>
</dbReference>
<dbReference type="FunFam" id="3.30.70.1400:FF:000001">
    <property type="entry name" value="Aminomethyltransferase"/>
    <property type="match status" value="1"/>
</dbReference>
<dbReference type="Gene3D" id="2.40.30.110">
    <property type="entry name" value="Aminomethyltransferase beta-barrel domains"/>
    <property type="match status" value="1"/>
</dbReference>
<dbReference type="Gene3D" id="3.30.70.1400">
    <property type="entry name" value="Aminomethyltransferase beta-barrel domains"/>
    <property type="match status" value="1"/>
</dbReference>
<dbReference type="Gene3D" id="4.10.1250.10">
    <property type="entry name" value="Aminomethyltransferase fragment"/>
    <property type="match status" value="1"/>
</dbReference>
<dbReference type="Gene3D" id="3.30.1360.120">
    <property type="entry name" value="Probable tRNA modification gtpase trme, domain 1"/>
    <property type="match status" value="1"/>
</dbReference>
<dbReference type="HAMAP" id="MF_00259">
    <property type="entry name" value="GcvT"/>
    <property type="match status" value="1"/>
</dbReference>
<dbReference type="InterPro" id="IPR006223">
    <property type="entry name" value="GCS_T"/>
</dbReference>
<dbReference type="InterPro" id="IPR022903">
    <property type="entry name" value="GCS_T_bac"/>
</dbReference>
<dbReference type="InterPro" id="IPR013977">
    <property type="entry name" value="GCST_C"/>
</dbReference>
<dbReference type="InterPro" id="IPR006222">
    <property type="entry name" value="GCV_T_N"/>
</dbReference>
<dbReference type="InterPro" id="IPR028896">
    <property type="entry name" value="GcvT/YgfZ/DmdA"/>
</dbReference>
<dbReference type="InterPro" id="IPR029043">
    <property type="entry name" value="GcvT/YgfZ_C"/>
</dbReference>
<dbReference type="InterPro" id="IPR027266">
    <property type="entry name" value="TrmE/GcvT_dom1"/>
</dbReference>
<dbReference type="NCBIfam" id="TIGR00528">
    <property type="entry name" value="gcvT"/>
    <property type="match status" value="1"/>
</dbReference>
<dbReference type="NCBIfam" id="NF001567">
    <property type="entry name" value="PRK00389.1"/>
    <property type="match status" value="1"/>
</dbReference>
<dbReference type="PANTHER" id="PTHR43757">
    <property type="entry name" value="AMINOMETHYLTRANSFERASE"/>
    <property type="match status" value="1"/>
</dbReference>
<dbReference type="PANTHER" id="PTHR43757:SF2">
    <property type="entry name" value="AMINOMETHYLTRANSFERASE, MITOCHONDRIAL"/>
    <property type="match status" value="1"/>
</dbReference>
<dbReference type="Pfam" id="PF01571">
    <property type="entry name" value="GCV_T"/>
    <property type="match status" value="1"/>
</dbReference>
<dbReference type="Pfam" id="PF08669">
    <property type="entry name" value="GCV_T_C"/>
    <property type="match status" value="1"/>
</dbReference>
<dbReference type="PIRSF" id="PIRSF006487">
    <property type="entry name" value="GcvT"/>
    <property type="match status" value="1"/>
</dbReference>
<dbReference type="SUPFAM" id="SSF101790">
    <property type="entry name" value="Aminomethyltransferase beta-barrel domain"/>
    <property type="match status" value="1"/>
</dbReference>
<dbReference type="SUPFAM" id="SSF103025">
    <property type="entry name" value="Folate-binding domain"/>
    <property type="match status" value="1"/>
</dbReference>
<feature type="chain" id="PRO_0000122608" description="Aminomethyltransferase">
    <location>
        <begin position="1"/>
        <end position="367"/>
    </location>
</feature>
<comment type="function">
    <text evidence="1">The glycine cleavage system catalyzes the degradation of glycine.</text>
</comment>
<comment type="catalytic activity">
    <reaction evidence="1">
        <text>N(6)-[(R)-S(8)-aminomethyldihydrolipoyl]-L-lysyl-[protein] + (6S)-5,6,7,8-tetrahydrofolate = N(6)-[(R)-dihydrolipoyl]-L-lysyl-[protein] + (6R)-5,10-methylene-5,6,7,8-tetrahydrofolate + NH4(+)</text>
        <dbReference type="Rhea" id="RHEA:16945"/>
        <dbReference type="Rhea" id="RHEA-COMP:10475"/>
        <dbReference type="Rhea" id="RHEA-COMP:10492"/>
        <dbReference type="ChEBI" id="CHEBI:15636"/>
        <dbReference type="ChEBI" id="CHEBI:28938"/>
        <dbReference type="ChEBI" id="CHEBI:57453"/>
        <dbReference type="ChEBI" id="CHEBI:83100"/>
        <dbReference type="ChEBI" id="CHEBI:83143"/>
        <dbReference type="EC" id="2.1.2.10"/>
    </reaction>
</comment>
<comment type="subunit">
    <text evidence="1">The glycine cleavage system is composed of four proteins: P, T, L and H.</text>
</comment>
<comment type="similarity">
    <text evidence="1">Belongs to the GcvT family.</text>
</comment>
<accession>Q7TTS1</accession>
<organism>
    <name type="scientific">Parasynechococcus marenigrum (strain WH8102)</name>
    <dbReference type="NCBI Taxonomy" id="84588"/>
    <lineage>
        <taxon>Bacteria</taxon>
        <taxon>Bacillati</taxon>
        <taxon>Cyanobacteriota</taxon>
        <taxon>Cyanophyceae</taxon>
        <taxon>Synechococcales</taxon>
        <taxon>Prochlorococcaceae</taxon>
        <taxon>Parasynechococcus</taxon>
        <taxon>Parasynechococcus marenigrum</taxon>
    </lineage>
</organism>
<name>GCST_PARMW</name>
<protein>
    <recommendedName>
        <fullName evidence="1">Aminomethyltransferase</fullName>
        <ecNumber evidence="1">2.1.2.10</ecNumber>
    </recommendedName>
    <alternativeName>
        <fullName evidence="1">Glycine cleavage system T protein</fullName>
    </alternativeName>
</protein>
<proteinExistence type="inferred from homology"/>
<gene>
    <name evidence="1" type="primary">gcvT</name>
    <name type="ordered locus">SYNW2425</name>
</gene>
<reference key="1">
    <citation type="journal article" date="2003" name="Nature">
        <title>The genome of a motile marine Synechococcus.</title>
        <authorList>
            <person name="Palenik B."/>
            <person name="Brahamsha B."/>
            <person name="Larimer F.W."/>
            <person name="Land M.L."/>
            <person name="Hauser L."/>
            <person name="Chain P."/>
            <person name="Lamerdin J.E."/>
            <person name="Regala W."/>
            <person name="Allen E.E."/>
            <person name="McCarren J."/>
            <person name="Paulsen I.T."/>
            <person name="Dufresne A."/>
            <person name="Partensky F."/>
            <person name="Webb E.A."/>
            <person name="Waterbury J."/>
        </authorList>
    </citation>
    <scope>NUCLEOTIDE SEQUENCE [LARGE SCALE GENOMIC DNA]</scope>
    <source>
        <strain>WH8102</strain>
    </source>
</reference>
<evidence type="ECO:0000255" key="1">
    <source>
        <dbReference type="HAMAP-Rule" id="MF_00259"/>
    </source>
</evidence>
<keyword id="KW-0032">Aminotransferase</keyword>
<keyword id="KW-0808">Transferase</keyword>